<reference key="1">
    <citation type="submission" date="2008-06" db="EMBL/GenBank/DDBJ databases">
        <title>Complete sequence of Pelodictyon phaeoclathratiforme BU-1.</title>
        <authorList>
            <consortium name="US DOE Joint Genome Institute"/>
            <person name="Lucas S."/>
            <person name="Copeland A."/>
            <person name="Lapidus A."/>
            <person name="Glavina del Rio T."/>
            <person name="Dalin E."/>
            <person name="Tice H."/>
            <person name="Bruce D."/>
            <person name="Goodwin L."/>
            <person name="Pitluck S."/>
            <person name="Schmutz J."/>
            <person name="Larimer F."/>
            <person name="Land M."/>
            <person name="Hauser L."/>
            <person name="Kyrpides N."/>
            <person name="Mikhailova N."/>
            <person name="Liu Z."/>
            <person name="Li T."/>
            <person name="Zhao F."/>
            <person name="Overmann J."/>
            <person name="Bryant D.A."/>
            <person name="Richardson P."/>
        </authorList>
    </citation>
    <scope>NUCLEOTIDE SEQUENCE [LARGE SCALE GENOMIC DNA]</scope>
    <source>
        <strain>DSM 5477 / BU-1</strain>
    </source>
</reference>
<organism>
    <name type="scientific">Pelodictyon phaeoclathratiforme (strain DSM 5477 / BU-1)</name>
    <dbReference type="NCBI Taxonomy" id="324925"/>
    <lineage>
        <taxon>Bacteria</taxon>
        <taxon>Pseudomonadati</taxon>
        <taxon>Chlorobiota</taxon>
        <taxon>Chlorobiia</taxon>
        <taxon>Chlorobiales</taxon>
        <taxon>Chlorobiaceae</taxon>
        <taxon>Chlorobium/Pelodictyon group</taxon>
        <taxon>Pelodictyon</taxon>
    </lineage>
</organism>
<name>NUOD_PELPB</name>
<gene>
    <name evidence="1" type="primary">nuoD</name>
    <name type="ordered locus">Ppha_1870</name>
</gene>
<comment type="function">
    <text evidence="1">NDH-1 shuttles electrons from NADH, via FMN and iron-sulfur (Fe-S) centers, to quinones in the respiratory chain. The immediate electron acceptor for the enzyme in this species is believed to be a menaquinone. Couples the redox reaction to proton translocation (for every two electrons transferred, four hydrogen ions are translocated across the cytoplasmic membrane), and thus conserves the redox energy in a proton gradient.</text>
</comment>
<comment type="catalytic activity">
    <reaction evidence="1">
        <text>a quinone + NADH + 5 H(+)(in) = a quinol + NAD(+) + 4 H(+)(out)</text>
        <dbReference type="Rhea" id="RHEA:57888"/>
        <dbReference type="ChEBI" id="CHEBI:15378"/>
        <dbReference type="ChEBI" id="CHEBI:24646"/>
        <dbReference type="ChEBI" id="CHEBI:57540"/>
        <dbReference type="ChEBI" id="CHEBI:57945"/>
        <dbReference type="ChEBI" id="CHEBI:132124"/>
    </reaction>
</comment>
<comment type="subunit">
    <text evidence="1">NDH-1 is composed of 14 different subunits. Subunits NuoB, C, D, E, F, and G constitute the peripheral sector of the complex.</text>
</comment>
<comment type="subcellular location">
    <subcellularLocation>
        <location evidence="1">Cell inner membrane</location>
        <topology evidence="1">Peripheral membrane protein</topology>
        <orientation evidence="1">Cytoplasmic side</orientation>
    </subcellularLocation>
</comment>
<comment type="similarity">
    <text evidence="1">Belongs to the complex I 49 kDa subunit family.</text>
</comment>
<keyword id="KW-0997">Cell inner membrane</keyword>
<keyword id="KW-1003">Cell membrane</keyword>
<keyword id="KW-0472">Membrane</keyword>
<keyword id="KW-0520">NAD</keyword>
<keyword id="KW-0874">Quinone</keyword>
<keyword id="KW-1185">Reference proteome</keyword>
<keyword id="KW-1278">Translocase</keyword>
<keyword id="KW-0813">Transport</keyword>
<proteinExistence type="inferred from homology"/>
<accession>B4SBZ0</accession>
<dbReference type="EC" id="7.1.1.-" evidence="1"/>
<dbReference type="EMBL" id="CP001110">
    <property type="protein sequence ID" value="ACF44096.1"/>
    <property type="molecule type" value="Genomic_DNA"/>
</dbReference>
<dbReference type="RefSeq" id="WP_012508580.1">
    <property type="nucleotide sequence ID" value="NC_011060.1"/>
</dbReference>
<dbReference type="SMR" id="B4SBZ0"/>
<dbReference type="STRING" id="324925.Ppha_1870"/>
<dbReference type="KEGG" id="pph:Ppha_1870"/>
<dbReference type="eggNOG" id="COG0649">
    <property type="taxonomic scope" value="Bacteria"/>
</dbReference>
<dbReference type="HOGENOM" id="CLU_015134_1_2_10"/>
<dbReference type="OrthoDB" id="9801496at2"/>
<dbReference type="Proteomes" id="UP000002724">
    <property type="component" value="Chromosome"/>
</dbReference>
<dbReference type="GO" id="GO:0005886">
    <property type="term" value="C:plasma membrane"/>
    <property type="evidence" value="ECO:0007669"/>
    <property type="project" value="UniProtKB-SubCell"/>
</dbReference>
<dbReference type="GO" id="GO:0051287">
    <property type="term" value="F:NAD binding"/>
    <property type="evidence" value="ECO:0007669"/>
    <property type="project" value="InterPro"/>
</dbReference>
<dbReference type="GO" id="GO:0050136">
    <property type="term" value="F:NADH:ubiquinone reductase (non-electrogenic) activity"/>
    <property type="evidence" value="ECO:0007669"/>
    <property type="project" value="UniProtKB-UniRule"/>
</dbReference>
<dbReference type="GO" id="GO:0048038">
    <property type="term" value="F:quinone binding"/>
    <property type="evidence" value="ECO:0007669"/>
    <property type="project" value="UniProtKB-KW"/>
</dbReference>
<dbReference type="Gene3D" id="1.10.645.10">
    <property type="entry name" value="Cytochrome-c3 Hydrogenase, chain B"/>
    <property type="match status" value="1"/>
</dbReference>
<dbReference type="HAMAP" id="MF_01358">
    <property type="entry name" value="NDH1_NuoD"/>
    <property type="match status" value="1"/>
</dbReference>
<dbReference type="InterPro" id="IPR001135">
    <property type="entry name" value="NADH_Q_OxRdtase_suD"/>
</dbReference>
<dbReference type="InterPro" id="IPR022885">
    <property type="entry name" value="NDH1_su_D/H"/>
</dbReference>
<dbReference type="InterPro" id="IPR029014">
    <property type="entry name" value="NiFe-Hase_large"/>
</dbReference>
<dbReference type="NCBIfam" id="NF004739">
    <property type="entry name" value="PRK06075.1"/>
    <property type="match status" value="1"/>
</dbReference>
<dbReference type="PANTHER" id="PTHR11993:SF10">
    <property type="entry name" value="NADH DEHYDROGENASE [UBIQUINONE] IRON-SULFUR PROTEIN 2, MITOCHONDRIAL"/>
    <property type="match status" value="1"/>
</dbReference>
<dbReference type="PANTHER" id="PTHR11993">
    <property type="entry name" value="NADH-UBIQUINONE OXIDOREDUCTASE 49 KDA SUBUNIT"/>
    <property type="match status" value="1"/>
</dbReference>
<dbReference type="Pfam" id="PF00346">
    <property type="entry name" value="Complex1_49kDa"/>
    <property type="match status" value="1"/>
</dbReference>
<dbReference type="SUPFAM" id="SSF56762">
    <property type="entry name" value="HydB/Nqo4-like"/>
    <property type="match status" value="1"/>
</dbReference>
<feature type="chain" id="PRO_0000357886" description="NADH-quinone oxidoreductase subunit D">
    <location>
        <begin position="1"/>
        <end position="400"/>
    </location>
</feature>
<protein>
    <recommendedName>
        <fullName evidence="1">NADH-quinone oxidoreductase subunit D</fullName>
        <ecNumber evidence="1">7.1.1.-</ecNumber>
    </recommendedName>
    <alternativeName>
        <fullName evidence="1">NADH dehydrogenase I subunit D</fullName>
    </alternativeName>
    <alternativeName>
        <fullName evidence="1">NDH-1 subunit D</fullName>
    </alternativeName>
</protein>
<sequence length="400" mass="44859">MQELDIAGVGSVRVTRKNDNVVVIEKDLATEQMILAMGPQHPSTHGVLKLECLTDGEVITEAEPYLGYLHRCFEKSCEHVDYPAIVPYTDRLDYLASMNSEQAYAMAVEKLLDIEIPRRVEFIRVIVAELNRIASHLVAIGTYGIDLGAFTPFLFCFRDREIILGLLEWASGARMLYNYIWIGGLAYDVPSDFFKRVGEFVTYFRPKAVELCNLLTENEIFVKRTRGIGIMPADVAINYGWSGPMLRGSGVKWDLRRNDPYSVYPELDFSVPVPDGKVSVVGDCLSRHLVRAYEMDESLKIIEQCIDKMPTAEGFNPRSAIPKRIRPKAGEVYARAENPRGELGFYIMSDGKSTKPLRCKARSSCFVNLSAMKDLSKGQLIPDLVAIIGSIDIVLGEVDR</sequence>
<evidence type="ECO:0000255" key="1">
    <source>
        <dbReference type="HAMAP-Rule" id="MF_01358"/>
    </source>
</evidence>